<organism>
    <name type="scientific">Thiobacillus denitrificans (strain ATCC 25259 / T1)</name>
    <dbReference type="NCBI Taxonomy" id="292415"/>
    <lineage>
        <taxon>Bacteria</taxon>
        <taxon>Pseudomonadati</taxon>
        <taxon>Pseudomonadota</taxon>
        <taxon>Betaproteobacteria</taxon>
        <taxon>Nitrosomonadales</taxon>
        <taxon>Thiobacillaceae</taxon>
        <taxon>Thiobacillus</taxon>
    </lineage>
</organism>
<feature type="chain" id="PRO_0000277785" description="Integration host factor subunit alpha">
    <location>
        <begin position="1"/>
        <end position="103"/>
    </location>
</feature>
<feature type="region of interest" description="Disordered" evidence="2">
    <location>
        <begin position="55"/>
        <end position="74"/>
    </location>
</feature>
<name>IHFA_THIDA</name>
<accession>Q3SK28</accession>
<sequence>MTTLTKADLAELLFEKVGLNKREAKDVVESFFDEIRLALEKGDIVKLSGFGNFQCREKPQRPGRNPKTGEEMPISARRVVTFHASQKLKSQVEGARIGTPSQE</sequence>
<reference key="1">
    <citation type="journal article" date="2006" name="J. Bacteriol.">
        <title>The genome sequence of the obligately chemolithoautotrophic, facultatively anaerobic bacterium Thiobacillus denitrificans.</title>
        <authorList>
            <person name="Beller H.R."/>
            <person name="Chain P.S."/>
            <person name="Letain T.E."/>
            <person name="Chakicherla A."/>
            <person name="Larimer F.W."/>
            <person name="Richardson P.M."/>
            <person name="Coleman M.A."/>
            <person name="Wood A.P."/>
            <person name="Kelly D.P."/>
        </authorList>
    </citation>
    <scope>NUCLEOTIDE SEQUENCE [LARGE SCALE GENOMIC DNA]</scope>
    <source>
        <strain>ATCC 25259 / T1</strain>
    </source>
</reference>
<comment type="function">
    <text evidence="1">This protein is one of the two subunits of integration host factor, a specific DNA-binding protein that functions in genetic recombination as well as in transcriptional and translational control.</text>
</comment>
<comment type="subunit">
    <text evidence="1">Heterodimer of an alpha and a beta chain.</text>
</comment>
<comment type="similarity">
    <text evidence="1">Belongs to the bacterial histone-like protein family.</text>
</comment>
<keyword id="KW-0233">DNA recombination</keyword>
<keyword id="KW-0238">DNA-binding</keyword>
<keyword id="KW-1185">Reference proteome</keyword>
<keyword id="KW-0804">Transcription</keyword>
<keyword id="KW-0805">Transcription regulation</keyword>
<keyword id="KW-0810">Translation regulation</keyword>
<dbReference type="EMBL" id="CP000116">
    <property type="protein sequence ID" value="AAZ96966.1"/>
    <property type="molecule type" value="Genomic_DNA"/>
</dbReference>
<dbReference type="RefSeq" id="WP_011311525.1">
    <property type="nucleotide sequence ID" value="NC_007404.1"/>
</dbReference>
<dbReference type="SMR" id="Q3SK28"/>
<dbReference type="STRING" id="292415.Tbd_1013"/>
<dbReference type="KEGG" id="tbd:Tbd_1013"/>
<dbReference type="eggNOG" id="COG0776">
    <property type="taxonomic scope" value="Bacteria"/>
</dbReference>
<dbReference type="HOGENOM" id="CLU_105066_1_0_4"/>
<dbReference type="OrthoDB" id="9797747at2"/>
<dbReference type="Proteomes" id="UP000008291">
    <property type="component" value="Chromosome"/>
</dbReference>
<dbReference type="GO" id="GO:0005829">
    <property type="term" value="C:cytosol"/>
    <property type="evidence" value="ECO:0007669"/>
    <property type="project" value="TreeGrafter"/>
</dbReference>
<dbReference type="GO" id="GO:0003677">
    <property type="term" value="F:DNA binding"/>
    <property type="evidence" value="ECO:0007669"/>
    <property type="project" value="UniProtKB-UniRule"/>
</dbReference>
<dbReference type="GO" id="GO:0030527">
    <property type="term" value="F:structural constituent of chromatin"/>
    <property type="evidence" value="ECO:0007669"/>
    <property type="project" value="InterPro"/>
</dbReference>
<dbReference type="GO" id="GO:0006310">
    <property type="term" value="P:DNA recombination"/>
    <property type="evidence" value="ECO:0007669"/>
    <property type="project" value="UniProtKB-UniRule"/>
</dbReference>
<dbReference type="GO" id="GO:0009893">
    <property type="term" value="P:positive regulation of metabolic process"/>
    <property type="evidence" value="ECO:0007669"/>
    <property type="project" value="UniProtKB-ARBA"/>
</dbReference>
<dbReference type="GO" id="GO:0006355">
    <property type="term" value="P:regulation of DNA-templated transcription"/>
    <property type="evidence" value="ECO:0007669"/>
    <property type="project" value="UniProtKB-UniRule"/>
</dbReference>
<dbReference type="GO" id="GO:0006417">
    <property type="term" value="P:regulation of translation"/>
    <property type="evidence" value="ECO:0007669"/>
    <property type="project" value="UniProtKB-UniRule"/>
</dbReference>
<dbReference type="CDD" id="cd13835">
    <property type="entry name" value="IHF_A"/>
    <property type="match status" value="1"/>
</dbReference>
<dbReference type="FunFam" id="4.10.520.10:FF:000002">
    <property type="entry name" value="Integration host factor subunit alpha"/>
    <property type="match status" value="1"/>
</dbReference>
<dbReference type="Gene3D" id="4.10.520.10">
    <property type="entry name" value="IHF-like DNA-binding proteins"/>
    <property type="match status" value="1"/>
</dbReference>
<dbReference type="HAMAP" id="MF_00380">
    <property type="entry name" value="IHF_alpha"/>
    <property type="match status" value="1"/>
</dbReference>
<dbReference type="InterPro" id="IPR000119">
    <property type="entry name" value="Hist_DNA-bd"/>
</dbReference>
<dbReference type="InterPro" id="IPR020816">
    <property type="entry name" value="Histone-like_DNA-bd_CS"/>
</dbReference>
<dbReference type="InterPro" id="IPR010992">
    <property type="entry name" value="IHF-like_DNA-bd_dom_sf"/>
</dbReference>
<dbReference type="InterPro" id="IPR005684">
    <property type="entry name" value="IHF_alpha"/>
</dbReference>
<dbReference type="NCBIfam" id="TIGR00987">
    <property type="entry name" value="himA"/>
    <property type="match status" value="1"/>
</dbReference>
<dbReference type="NCBIfam" id="NF001401">
    <property type="entry name" value="PRK00285.1"/>
    <property type="match status" value="1"/>
</dbReference>
<dbReference type="PANTHER" id="PTHR33175">
    <property type="entry name" value="DNA-BINDING PROTEIN HU"/>
    <property type="match status" value="1"/>
</dbReference>
<dbReference type="PANTHER" id="PTHR33175:SF2">
    <property type="entry name" value="INTEGRATION HOST FACTOR SUBUNIT ALPHA"/>
    <property type="match status" value="1"/>
</dbReference>
<dbReference type="Pfam" id="PF00216">
    <property type="entry name" value="Bac_DNA_binding"/>
    <property type="match status" value="1"/>
</dbReference>
<dbReference type="PRINTS" id="PR01727">
    <property type="entry name" value="DNABINDINGHU"/>
</dbReference>
<dbReference type="SMART" id="SM00411">
    <property type="entry name" value="BHL"/>
    <property type="match status" value="1"/>
</dbReference>
<dbReference type="SUPFAM" id="SSF47729">
    <property type="entry name" value="IHF-like DNA-binding proteins"/>
    <property type="match status" value="1"/>
</dbReference>
<dbReference type="PROSITE" id="PS00045">
    <property type="entry name" value="HISTONE_LIKE"/>
    <property type="match status" value="1"/>
</dbReference>
<gene>
    <name evidence="1" type="primary">ihfA</name>
    <name evidence="1" type="synonym">himA</name>
    <name type="ordered locus">Tbd_1013</name>
</gene>
<protein>
    <recommendedName>
        <fullName evidence="1">Integration host factor subunit alpha</fullName>
        <shortName evidence="1">IHF-alpha</shortName>
    </recommendedName>
</protein>
<proteinExistence type="inferred from homology"/>
<evidence type="ECO:0000255" key="1">
    <source>
        <dbReference type="HAMAP-Rule" id="MF_00380"/>
    </source>
</evidence>
<evidence type="ECO:0000256" key="2">
    <source>
        <dbReference type="SAM" id="MobiDB-lite"/>
    </source>
</evidence>